<evidence type="ECO:0000255" key="1"/>
<evidence type="ECO:0000256" key="2">
    <source>
        <dbReference type="SAM" id="MobiDB-lite"/>
    </source>
</evidence>
<evidence type="ECO:0000269" key="3">
    <source>
    </source>
</evidence>
<evidence type="ECO:0000269" key="4">
    <source>
    </source>
</evidence>
<evidence type="ECO:0000269" key="5">
    <source>
    </source>
</evidence>
<evidence type="ECO:0000303" key="6">
    <source>
    </source>
</evidence>
<evidence type="ECO:0000305" key="7"/>
<evidence type="ECO:0000312" key="8">
    <source>
        <dbReference type="EMBL" id="BAC00460.1"/>
    </source>
</evidence>
<comment type="function">
    <text evidence="5">Involved in the uptake of osmoprotectants. Can transport ectoine and proline. Protons are probably the coupling ions.</text>
</comment>
<comment type="activity regulation">
    <text evidence="3 5">Uptake is activated by osmotic stress (PubMed:16239220). Inhibited by CCCP (PubMed:9811661).</text>
</comment>
<comment type="biophysicochemical properties">
    <kinetics>
        <KM evidence="5">48 uM for proline</KM>
        <KM evidence="5">132 uM for ectoine</KM>
    </kinetics>
</comment>
<comment type="subcellular location">
    <subcellularLocation>
        <location evidence="7">Cell membrane</location>
        <topology evidence="1">Multi-pass membrane protein</topology>
    </subcellularLocation>
</comment>
<comment type="induction">
    <text evidence="4">Induced upon hyperosmotic conditions, resulting in an increase of its transport activity.</text>
</comment>
<comment type="similarity">
    <text evidence="7">Belongs to the major facilitator superfamily.</text>
</comment>
<sequence>MSPIRSKKKIKNEPRLTVDDVNVVPPKKIRPAIKGTVVGNFMEWYDFGIYGYLTVTMTAVFTQGLPQEWQLLAVMFGFAVSYLVRPLGGLVLGPLGDKVGRQKVLYVTMAMMAVSTALIGLLPTAASIGAWALVLLYLLKMVQGFSTGGEYAGATTYVAEFAPDRRRGFFGAFLDMGSYLGFAAGASVVAITTWVTTHFYGATAMEDFGWRIPFLTAIPLGIIAVYLRTRIPETPAFENNQDEPNAVVEKDTEDPYARLGLAGVIRHHWRPLLIGIAIVAATNTAGYALTSYMPVYLEEQIGLHSASAAAVTVPILVVMSLLLPFVGMWSDRVGRKPVYATAVAATLILMVPAFLIMNTGTIGAVLIALSMVAIPTGLYVALSASALPALFPTASRFSGMGISYNISVSLFGGTTPLITQFLLQKTGLDIVPALYIMFFSAIAGVALLFMTESSQKPLLGSFPTVETKSEAVEIVKNQDEDPNIDLSHMPFPDEENVGAEKQNA</sequence>
<organism>
    <name type="scientific">Corynebacterium glutamicum (strain ATCC 13032 / DSM 20300 / JCM 1318 / BCRC 11384 / CCUG 27702 / LMG 3730 / NBRC 12168 / NCIMB 10025 / NRRL B-2784 / 534)</name>
    <dbReference type="NCBI Taxonomy" id="196627"/>
    <lineage>
        <taxon>Bacteria</taxon>
        <taxon>Bacillati</taxon>
        <taxon>Actinomycetota</taxon>
        <taxon>Actinomycetes</taxon>
        <taxon>Mycobacteriales</taxon>
        <taxon>Corynebacteriaceae</taxon>
        <taxon>Corynebacterium</taxon>
    </lineage>
</organism>
<name>PROP_CORGL</name>
<keyword id="KW-0029">Amino-acid transport</keyword>
<keyword id="KW-1003">Cell membrane</keyword>
<keyword id="KW-0472">Membrane</keyword>
<keyword id="KW-1185">Reference proteome</keyword>
<keyword id="KW-0346">Stress response</keyword>
<keyword id="KW-0769">Symport</keyword>
<keyword id="KW-0812">Transmembrane</keyword>
<keyword id="KW-1133">Transmembrane helix</keyword>
<keyword id="KW-0813">Transport</keyword>
<proteinExistence type="evidence at protein level"/>
<reference key="1">
    <citation type="journal article" date="1998" name="J. Bacteriol.">
        <title>Corynebacterium glutamicum is equipped with four secondary carriers for compatible solutes: identification, sequencing, and characterization of the proline/ectoine uptake system, ProP, and the ectoine/proline/glycine betaine carrier, EctP.</title>
        <authorList>
            <person name="Peter H."/>
            <person name="Weil B."/>
            <person name="Burkovski A."/>
            <person name="Kramer R."/>
            <person name="Morbach S."/>
        </authorList>
    </citation>
    <scope>NUCLEOTIDE SEQUENCE [GENOMIC DNA]</scope>
    <scope>FUNCTION</scope>
    <scope>ACTIVITY REGULATION</scope>
    <scope>BIOPHYSICOCHEMICAL PROPERTIES</scope>
    <source>
        <strain>ATCC 13032 / DSM 20300 / JCM 1318 / BCRC 11384 / CCUG 27702 / LMG 3730 / NBRC 12168 / NCIMB 10025 / NRRL B-2784 / 534</strain>
    </source>
</reference>
<reference key="2">
    <citation type="journal article" date="2003" name="Appl. Microbiol. Biotechnol.">
        <title>The Corynebacterium glutamicum genome: features and impacts on biotechnological processes.</title>
        <authorList>
            <person name="Ikeda M."/>
            <person name="Nakagawa S."/>
        </authorList>
    </citation>
    <scope>NUCLEOTIDE SEQUENCE [LARGE SCALE GENOMIC DNA]</scope>
    <source>
        <strain>ATCC 13032 / DSM 20300 / JCM 1318 / BCRC 11384 / CCUG 27702 / LMG 3730 / NBRC 12168 / NCIMB 10025 / NRRL B-2784 / 534</strain>
    </source>
</reference>
<reference key="3">
    <citation type="journal article" date="2005" name="J. Biol. Chem.">
        <title>The osmotic activation of transporter ProP is tuned by both its C-terminal coiled-coil and osmotically induced changes in phospholipid composition.</title>
        <authorList>
            <person name="Tsatskis Y."/>
            <person name="Khambati J."/>
            <person name="Dobson M."/>
            <person name="Bogdanov M."/>
            <person name="Dowhan W."/>
            <person name="Wood J.M."/>
        </authorList>
    </citation>
    <scope>ACTIVITY REGULATION</scope>
</reference>
<reference key="4">
    <citation type="journal article" date="2007" name="Appl. Microbiol. Biotechnol.">
        <title>Characterization of compatible solute transporter multiplicity in Corynebacterium glutamicum.</title>
        <authorList>
            <person name="Weinand M."/>
            <person name="Kraemer R."/>
            <person name="Morbach S."/>
        </authorList>
    </citation>
    <scope>INDUCTION</scope>
    <source>
        <strain>ATCC 13032 / DSM 20300 / JCM 1318 / BCRC 11384 / CCUG 27702 / LMG 3730 / NBRC 12168 / NCIMB 10025 / NRRL B-2784 / 534</strain>
    </source>
</reference>
<protein>
    <recommendedName>
        <fullName evidence="7">Ectoine/proline transporter ProP</fullName>
    </recommendedName>
</protein>
<accession>Q79VC4</accession>
<accession>H7C6A8</accession>
<accession>O69284</accession>
<dbReference type="EMBL" id="Y12537">
    <property type="protein sequence ID" value="CAA73136.1"/>
    <property type="molecule type" value="Genomic_DNA"/>
</dbReference>
<dbReference type="EMBL" id="BA000036">
    <property type="protein sequence ID" value="BAC00460.1"/>
    <property type="molecule type" value="Genomic_DNA"/>
</dbReference>
<dbReference type="RefSeq" id="NP_602258.1">
    <property type="nucleotide sequence ID" value="NC_003450.3"/>
</dbReference>
<dbReference type="RefSeq" id="WP_011015605.1">
    <property type="nucleotide sequence ID" value="NC_006958.1"/>
</dbReference>
<dbReference type="SMR" id="Q79VC4"/>
<dbReference type="STRING" id="196627.cg3395"/>
<dbReference type="KEGG" id="cgb:cg3395"/>
<dbReference type="KEGG" id="cgl:Cgl3066"/>
<dbReference type="PATRIC" id="fig|196627.13.peg.2998"/>
<dbReference type="eggNOG" id="COG0477">
    <property type="taxonomic scope" value="Bacteria"/>
</dbReference>
<dbReference type="HOGENOM" id="CLU_001265_39_0_11"/>
<dbReference type="OrthoDB" id="8953821at2"/>
<dbReference type="BioCyc" id="CORYNE:G18NG-12687-MONOMER"/>
<dbReference type="Proteomes" id="UP000000582">
    <property type="component" value="Chromosome"/>
</dbReference>
<dbReference type="GO" id="GO:0005886">
    <property type="term" value="C:plasma membrane"/>
    <property type="evidence" value="ECO:0007669"/>
    <property type="project" value="UniProtKB-SubCell"/>
</dbReference>
<dbReference type="GO" id="GO:0015293">
    <property type="term" value="F:symporter activity"/>
    <property type="evidence" value="ECO:0007669"/>
    <property type="project" value="UniProtKB-KW"/>
</dbReference>
<dbReference type="GO" id="GO:0006865">
    <property type="term" value="P:amino acid transport"/>
    <property type="evidence" value="ECO:0007669"/>
    <property type="project" value="UniProtKB-KW"/>
</dbReference>
<dbReference type="CDD" id="cd17366">
    <property type="entry name" value="MFS_ProP"/>
    <property type="match status" value="1"/>
</dbReference>
<dbReference type="Gene3D" id="1.20.1250.20">
    <property type="entry name" value="MFS general substrate transporter like domains"/>
    <property type="match status" value="2"/>
</dbReference>
<dbReference type="InterPro" id="IPR051084">
    <property type="entry name" value="H+-coupled_symporters"/>
</dbReference>
<dbReference type="InterPro" id="IPR020846">
    <property type="entry name" value="MFS_dom"/>
</dbReference>
<dbReference type="InterPro" id="IPR005828">
    <property type="entry name" value="MFS_sugar_transport-like"/>
</dbReference>
<dbReference type="InterPro" id="IPR036259">
    <property type="entry name" value="MFS_trans_sf"/>
</dbReference>
<dbReference type="InterPro" id="IPR005829">
    <property type="entry name" value="Sugar_transporter_CS"/>
</dbReference>
<dbReference type="PANTHER" id="PTHR43528">
    <property type="entry name" value="ALPHA-KETOGLUTARATE PERMEASE"/>
    <property type="match status" value="1"/>
</dbReference>
<dbReference type="PANTHER" id="PTHR43528:SF1">
    <property type="entry name" value="ALPHA-KETOGLUTARATE PERMEASE"/>
    <property type="match status" value="1"/>
</dbReference>
<dbReference type="Pfam" id="PF00083">
    <property type="entry name" value="Sugar_tr"/>
    <property type="match status" value="1"/>
</dbReference>
<dbReference type="SUPFAM" id="SSF103473">
    <property type="entry name" value="MFS general substrate transporter"/>
    <property type="match status" value="1"/>
</dbReference>
<dbReference type="PROSITE" id="PS50850">
    <property type="entry name" value="MFS"/>
    <property type="match status" value="1"/>
</dbReference>
<dbReference type="PROSITE" id="PS00216">
    <property type="entry name" value="SUGAR_TRANSPORT_1"/>
    <property type="match status" value="1"/>
</dbReference>
<dbReference type="PROSITE" id="PS00217">
    <property type="entry name" value="SUGAR_TRANSPORT_2"/>
    <property type="match status" value="1"/>
</dbReference>
<feature type="chain" id="PRO_0000441733" description="Ectoine/proline transporter ProP">
    <location>
        <begin position="1"/>
        <end position="504"/>
    </location>
</feature>
<feature type="transmembrane region" description="Helical" evidence="1">
    <location>
        <begin position="41"/>
        <end position="61"/>
    </location>
</feature>
<feature type="transmembrane region" description="Helical" evidence="1">
    <location>
        <begin position="71"/>
        <end position="91"/>
    </location>
</feature>
<feature type="transmembrane region" description="Helical" evidence="1">
    <location>
        <begin position="118"/>
        <end position="138"/>
    </location>
</feature>
<feature type="transmembrane region" description="Helical" evidence="1">
    <location>
        <begin position="169"/>
        <end position="189"/>
    </location>
</feature>
<feature type="transmembrane region" description="Helical" evidence="1">
    <location>
        <begin position="207"/>
        <end position="227"/>
    </location>
</feature>
<feature type="transmembrane region" description="Helical" evidence="1">
    <location>
        <begin position="272"/>
        <end position="292"/>
    </location>
</feature>
<feature type="transmembrane region" description="Helical" evidence="1">
    <location>
        <begin position="309"/>
        <end position="329"/>
    </location>
</feature>
<feature type="transmembrane region" description="Helical" evidence="1">
    <location>
        <begin position="337"/>
        <end position="357"/>
    </location>
</feature>
<feature type="transmembrane region" description="Helical" evidence="1">
    <location>
        <begin position="362"/>
        <end position="382"/>
    </location>
</feature>
<feature type="transmembrane region" description="Helical" evidence="1">
    <location>
        <begin position="399"/>
        <end position="419"/>
    </location>
</feature>
<feature type="transmembrane region" description="Helical" evidence="1">
    <location>
        <begin position="430"/>
        <end position="450"/>
    </location>
</feature>
<feature type="region of interest" description="Disordered" evidence="2">
    <location>
        <begin position="477"/>
        <end position="504"/>
    </location>
</feature>
<gene>
    <name evidence="6" type="primary">proP</name>
    <name evidence="8" type="ordered locus">Cgl3066</name>
</gene>